<sequence>MNSTRNIISLVRRYSTSRSVKIASHGSPSTALKIENENITDKISNKDVLVEMLHAPINPADLNIIQGTYGTNVQVGGVAGMEGVGVVKKVGSGVTGLKENDLVVPSMKQHFGSWRSKGVWSEQQLFKVPSDIPTEYLSTISINPTTAYLLLNDFVKLQQGDVIIQNASNSMVGLSVIQLAKARGIKTINVIRDGSEFEDNVQRLKQLGGDIVVSEEYVRTPAFRKLISDLPSPKLALNAVGGQSATELSRILADNGTLVTYGGMSREPVTIPTSQLIFRNIQIRGFWLNKWFEQHTDSEKQSVYDAIFDLIRKKQFKLLIEKHKFSEFDQALLKSQQSGHGRKIVLDLQL</sequence>
<protein>
    <recommendedName>
        <fullName>Enoyl-[acyl-carrier-protein] reductase, mitochondrial</fullName>
        <ecNumber>1.3.1.104</ecNumber>
    </recommendedName>
    <alternativeName>
        <fullName>2-enoyl thioester reductase</fullName>
    </alternativeName>
</protein>
<feature type="transit peptide" description="Mitochondrion" evidence="3">
    <location>
        <begin position="1"/>
        <end position="14"/>
    </location>
</feature>
<feature type="chain" id="PRO_0000328319" description="Enoyl-[acyl-carrier-protein] reductase, mitochondrial">
    <location>
        <begin position="15"/>
        <end position="350"/>
    </location>
</feature>
<feature type="active site" description="Proton donor" evidence="1">
    <location>
        <position position="69"/>
    </location>
</feature>
<feature type="binding site" evidence="1">
    <location>
        <position position="143"/>
    </location>
    <ligand>
        <name>NADP(+)</name>
        <dbReference type="ChEBI" id="CHEBI:58349"/>
    </ligand>
</feature>
<feature type="binding site" evidence="1">
    <location>
        <begin position="169"/>
        <end position="172"/>
    </location>
    <ligand>
        <name>NADP(+)</name>
        <dbReference type="ChEBI" id="CHEBI:58349"/>
    </ligand>
</feature>
<feature type="binding site" evidence="1">
    <location>
        <begin position="192"/>
        <end position="194"/>
    </location>
    <ligand>
        <name>NADP(+)</name>
        <dbReference type="ChEBI" id="CHEBI:58349"/>
    </ligand>
</feature>
<feature type="binding site" evidence="1">
    <location>
        <begin position="261"/>
        <end position="264"/>
    </location>
    <ligand>
        <name>NADP(+)</name>
        <dbReference type="ChEBI" id="CHEBI:58349"/>
    </ligand>
</feature>
<feature type="binding site" evidence="1">
    <location>
        <begin position="286"/>
        <end position="288"/>
    </location>
    <ligand>
        <name>NADP(+)</name>
        <dbReference type="ChEBI" id="CHEBI:58349"/>
    </ligand>
</feature>
<feature type="binding site" evidence="1">
    <location>
        <position position="343"/>
    </location>
    <ligand>
        <name>NADP(+)</name>
        <dbReference type="ChEBI" id="CHEBI:58349"/>
    </ligand>
</feature>
<comment type="function">
    <text evidence="2">Catalyzes the NADPH-dependent reduction of trans-2-enoyl thioesters in mitochondrial fatty acid synthesis (fatty acid synthesis type II). Fatty acid chain elongation in mitochondria uses acyl carrier protein (ACP) as an acyl group carrier, but the enzyme accepts both ACP and CoA thioesters as substrates in vitro.</text>
</comment>
<comment type="catalytic activity">
    <reaction evidence="2">
        <text>a 2,3-saturated acyl-[ACP] + NADP(+) = a (2E)-enoyl-[ACP] + NADPH + H(+)</text>
        <dbReference type="Rhea" id="RHEA:22564"/>
        <dbReference type="Rhea" id="RHEA-COMP:9925"/>
        <dbReference type="Rhea" id="RHEA-COMP:9926"/>
        <dbReference type="ChEBI" id="CHEBI:15378"/>
        <dbReference type="ChEBI" id="CHEBI:57783"/>
        <dbReference type="ChEBI" id="CHEBI:58349"/>
        <dbReference type="ChEBI" id="CHEBI:78784"/>
        <dbReference type="ChEBI" id="CHEBI:78785"/>
        <dbReference type="EC" id="1.3.1.104"/>
    </reaction>
</comment>
<comment type="subunit">
    <text evidence="2">Homodimer.</text>
</comment>
<comment type="subcellular location">
    <subcellularLocation>
        <location evidence="2">Mitochondrion</location>
    </subcellularLocation>
</comment>
<comment type="similarity">
    <text evidence="4">Belongs to the zinc-containing alcohol dehydrogenase family. Quinone oxidoreductase subfamily.</text>
</comment>
<gene>
    <name type="primary">mecr</name>
    <name type="ORF">DDB_G0278095</name>
</gene>
<dbReference type="EC" id="1.3.1.104"/>
<dbReference type="EMBL" id="AAFI02000023">
    <property type="protein sequence ID" value="EAL68220.1"/>
    <property type="molecule type" value="Genomic_DNA"/>
</dbReference>
<dbReference type="RefSeq" id="XP_642118.1">
    <property type="nucleotide sequence ID" value="XM_637026.1"/>
</dbReference>
<dbReference type="SMR" id="Q54YT4"/>
<dbReference type="FunCoup" id="Q54YT4">
    <property type="interactions" value="942"/>
</dbReference>
<dbReference type="STRING" id="44689.Q54YT4"/>
<dbReference type="PaxDb" id="44689-DDB0235198"/>
<dbReference type="EnsemblProtists" id="EAL68220">
    <property type="protein sequence ID" value="EAL68220"/>
    <property type="gene ID" value="DDB_G0278095"/>
</dbReference>
<dbReference type="GeneID" id="8621327"/>
<dbReference type="KEGG" id="ddi:DDB_G0278095"/>
<dbReference type="dictyBase" id="DDB_G0278095">
    <property type="gene designation" value="mecr"/>
</dbReference>
<dbReference type="VEuPathDB" id="AmoebaDB:DDB_G0278095"/>
<dbReference type="eggNOG" id="KOG0025">
    <property type="taxonomic scope" value="Eukaryota"/>
</dbReference>
<dbReference type="HOGENOM" id="CLU_026673_17_1_1"/>
<dbReference type="InParanoid" id="Q54YT4"/>
<dbReference type="OMA" id="YGYTQSK"/>
<dbReference type="PhylomeDB" id="Q54YT4"/>
<dbReference type="Reactome" id="R-DDI-77346">
    <property type="pathway name" value="Beta oxidation of decanoyl-CoA to octanoyl-CoA-CoA"/>
</dbReference>
<dbReference type="PRO" id="PR:Q54YT4"/>
<dbReference type="Proteomes" id="UP000002195">
    <property type="component" value="Chromosome 3"/>
</dbReference>
<dbReference type="GO" id="GO:0005739">
    <property type="term" value="C:mitochondrion"/>
    <property type="evidence" value="ECO:0000250"/>
    <property type="project" value="dictyBase"/>
</dbReference>
<dbReference type="GO" id="GO:0141148">
    <property type="term" value="F:enoyl-[acyl-carrier-protein] reductase (NADPH) activity"/>
    <property type="evidence" value="ECO:0007669"/>
    <property type="project" value="UniProtKB-EC"/>
</dbReference>
<dbReference type="GO" id="GO:0019166">
    <property type="term" value="F:trans-2-enoyl-CoA reductase (NADPH) activity"/>
    <property type="evidence" value="ECO:0000250"/>
    <property type="project" value="dictyBase"/>
</dbReference>
<dbReference type="GO" id="GO:0006633">
    <property type="term" value="P:fatty acid biosynthetic process"/>
    <property type="evidence" value="ECO:0000250"/>
    <property type="project" value="dictyBase"/>
</dbReference>
<dbReference type="GO" id="GO:0006631">
    <property type="term" value="P:fatty acid metabolic process"/>
    <property type="evidence" value="ECO:0000318"/>
    <property type="project" value="GO_Central"/>
</dbReference>
<dbReference type="CDD" id="cd08290">
    <property type="entry name" value="ETR"/>
    <property type="match status" value="1"/>
</dbReference>
<dbReference type="FunFam" id="3.40.50.720:FF:000112">
    <property type="entry name" value="Enoyl-[acyl-carrier-protein] reductase 1, mitochondrial"/>
    <property type="match status" value="1"/>
</dbReference>
<dbReference type="FunFam" id="3.90.180.10:FF:000094">
    <property type="entry name" value="Enoyl-[acyl-carrier-protein] reductase, mitochondrial"/>
    <property type="match status" value="1"/>
</dbReference>
<dbReference type="Gene3D" id="3.90.180.10">
    <property type="entry name" value="Medium-chain alcohol dehydrogenases, catalytic domain"/>
    <property type="match status" value="1"/>
</dbReference>
<dbReference type="Gene3D" id="3.40.50.720">
    <property type="entry name" value="NAD(P)-binding Rossmann-like Domain"/>
    <property type="match status" value="1"/>
</dbReference>
<dbReference type="InterPro" id="IPR013149">
    <property type="entry name" value="ADH-like_C"/>
</dbReference>
<dbReference type="InterPro" id="IPR013154">
    <property type="entry name" value="ADH-like_N"/>
</dbReference>
<dbReference type="InterPro" id="IPR011032">
    <property type="entry name" value="GroES-like_sf"/>
</dbReference>
<dbReference type="InterPro" id="IPR051034">
    <property type="entry name" value="Mito_Enoyl-ACP_Reductase"/>
</dbReference>
<dbReference type="InterPro" id="IPR036291">
    <property type="entry name" value="NAD(P)-bd_dom_sf"/>
</dbReference>
<dbReference type="InterPro" id="IPR020843">
    <property type="entry name" value="PKS_ER"/>
</dbReference>
<dbReference type="PANTHER" id="PTHR43981">
    <property type="entry name" value="ENOYL-[ACYL-CARRIER-PROTEIN] REDUCTASE, MITOCHONDRIAL"/>
    <property type="match status" value="1"/>
</dbReference>
<dbReference type="PANTHER" id="PTHR43981:SF2">
    <property type="entry name" value="ENOYL-[ACYL-CARRIER-PROTEIN] REDUCTASE, MITOCHONDRIAL"/>
    <property type="match status" value="1"/>
</dbReference>
<dbReference type="Pfam" id="PF08240">
    <property type="entry name" value="ADH_N"/>
    <property type="match status" value="1"/>
</dbReference>
<dbReference type="Pfam" id="PF00107">
    <property type="entry name" value="ADH_zinc_N"/>
    <property type="match status" value="1"/>
</dbReference>
<dbReference type="SMART" id="SM00829">
    <property type="entry name" value="PKS_ER"/>
    <property type="match status" value="1"/>
</dbReference>
<dbReference type="SUPFAM" id="SSF50129">
    <property type="entry name" value="GroES-like"/>
    <property type="match status" value="1"/>
</dbReference>
<dbReference type="SUPFAM" id="SSF51735">
    <property type="entry name" value="NAD(P)-binding Rossmann-fold domains"/>
    <property type="match status" value="1"/>
</dbReference>
<accession>Q54YT4</accession>
<organism>
    <name type="scientific">Dictyostelium discoideum</name>
    <name type="common">Social amoeba</name>
    <dbReference type="NCBI Taxonomy" id="44689"/>
    <lineage>
        <taxon>Eukaryota</taxon>
        <taxon>Amoebozoa</taxon>
        <taxon>Evosea</taxon>
        <taxon>Eumycetozoa</taxon>
        <taxon>Dictyostelia</taxon>
        <taxon>Dictyosteliales</taxon>
        <taxon>Dictyosteliaceae</taxon>
        <taxon>Dictyostelium</taxon>
    </lineage>
</organism>
<name>MECR_DICDI</name>
<reference key="1">
    <citation type="journal article" date="2005" name="Nature">
        <title>The genome of the social amoeba Dictyostelium discoideum.</title>
        <authorList>
            <person name="Eichinger L."/>
            <person name="Pachebat J.A."/>
            <person name="Gloeckner G."/>
            <person name="Rajandream M.A."/>
            <person name="Sucgang R."/>
            <person name="Berriman M."/>
            <person name="Song J."/>
            <person name="Olsen R."/>
            <person name="Szafranski K."/>
            <person name="Xu Q."/>
            <person name="Tunggal B."/>
            <person name="Kummerfeld S."/>
            <person name="Madera M."/>
            <person name="Konfortov B.A."/>
            <person name="Rivero F."/>
            <person name="Bankier A.T."/>
            <person name="Lehmann R."/>
            <person name="Hamlin N."/>
            <person name="Davies R."/>
            <person name="Gaudet P."/>
            <person name="Fey P."/>
            <person name="Pilcher K."/>
            <person name="Chen G."/>
            <person name="Saunders D."/>
            <person name="Sodergren E.J."/>
            <person name="Davis P."/>
            <person name="Kerhornou A."/>
            <person name="Nie X."/>
            <person name="Hall N."/>
            <person name="Anjard C."/>
            <person name="Hemphill L."/>
            <person name="Bason N."/>
            <person name="Farbrother P."/>
            <person name="Desany B."/>
            <person name="Just E."/>
            <person name="Morio T."/>
            <person name="Rost R."/>
            <person name="Churcher C.M."/>
            <person name="Cooper J."/>
            <person name="Haydock S."/>
            <person name="van Driessche N."/>
            <person name="Cronin A."/>
            <person name="Goodhead I."/>
            <person name="Muzny D.M."/>
            <person name="Mourier T."/>
            <person name="Pain A."/>
            <person name="Lu M."/>
            <person name="Harper D."/>
            <person name="Lindsay R."/>
            <person name="Hauser H."/>
            <person name="James K.D."/>
            <person name="Quiles M."/>
            <person name="Madan Babu M."/>
            <person name="Saito T."/>
            <person name="Buchrieser C."/>
            <person name="Wardroper A."/>
            <person name="Felder M."/>
            <person name="Thangavelu M."/>
            <person name="Johnson D."/>
            <person name="Knights A."/>
            <person name="Loulseged H."/>
            <person name="Mungall K.L."/>
            <person name="Oliver K."/>
            <person name="Price C."/>
            <person name="Quail M.A."/>
            <person name="Urushihara H."/>
            <person name="Hernandez J."/>
            <person name="Rabbinowitsch E."/>
            <person name="Steffen D."/>
            <person name="Sanders M."/>
            <person name="Ma J."/>
            <person name="Kohara Y."/>
            <person name="Sharp S."/>
            <person name="Simmonds M.N."/>
            <person name="Spiegler S."/>
            <person name="Tivey A."/>
            <person name="Sugano S."/>
            <person name="White B."/>
            <person name="Walker D."/>
            <person name="Woodward J.R."/>
            <person name="Winckler T."/>
            <person name="Tanaka Y."/>
            <person name="Shaulsky G."/>
            <person name="Schleicher M."/>
            <person name="Weinstock G.M."/>
            <person name="Rosenthal A."/>
            <person name="Cox E.C."/>
            <person name="Chisholm R.L."/>
            <person name="Gibbs R.A."/>
            <person name="Loomis W.F."/>
            <person name="Platzer M."/>
            <person name="Kay R.R."/>
            <person name="Williams J.G."/>
            <person name="Dear P.H."/>
            <person name="Noegel A.A."/>
            <person name="Barrell B.G."/>
            <person name="Kuspa A."/>
        </authorList>
    </citation>
    <scope>NUCLEOTIDE SEQUENCE [LARGE SCALE GENOMIC DNA]</scope>
    <source>
        <strain>AX4</strain>
    </source>
</reference>
<evidence type="ECO:0000250" key="1">
    <source>
        <dbReference type="UniProtKB" id="Q8WZM3"/>
    </source>
</evidence>
<evidence type="ECO:0000250" key="2">
    <source>
        <dbReference type="UniProtKB" id="Q9BV79"/>
    </source>
</evidence>
<evidence type="ECO:0000255" key="3"/>
<evidence type="ECO:0000305" key="4"/>
<keyword id="KW-0275">Fatty acid biosynthesis</keyword>
<keyword id="KW-0276">Fatty acid metabolism</keyword>
<keyword id="KW-0444">Lipid biosynthesis</keyword>
<keyword id="KW-0443">Lipid metabolism</keyword>
<keyword id="KW-0496">Mitochondrion</keyword>
<keyword id="KW-0521">NADP</keyword>
<keyword id="KW-0560">Oxidoreductase</keyword>
<keyword id="KW-1185">Reference proteome</keyword>
<keyword id="KW-0809">Transit peptide</keyword>
<proteinExistence type="inferred from homology"/>